<gene>
    <name type="ordered locus">BTH_I1090</name>
</gene>
<feature type="chain" id="PRO_0000262004" description="UPF0246 protein BTH_I1090">
    <location>
        <begin position="1"/>
        <end position="260"/>
    </location>
</feature>
<dbReference type="EMBL" id="CP000086">
    <property type="protein sequence ID" value="ABC37094.1"/>
    <property type="molecule type" value="Genomic_DNA"/>
</dbReference>
<dbReference type="SMR" id="Q2SZK6"/>
<dbReference type="GeneID" id="45120842"/>
<dbReference type="KEGG" id="bte:BTH_I1090"/>
<dbReference type="HOGENOM" id="CLU_061989_0_0_4"/>
<dbReference type="Proteomes" id="UP000001930">
    <property type="component" value="Chromosome I"/>
</dbReference>
<dbReference type="GO" id="GO:0005829">
    <property type="term" value="C:cytosol"/>
    <property type="evidence" value="ECO:0007669"/>
    <property type="project" value="TreeGrafter"/>
</dbReference>
<dbReference type="GO" id="GO:0033194">
    <property type="term" value="P:response to hydroperoxide"/>
    <property type="evidence" value="ECO:0007669"/>
    <property type="project" value="TreeGrafter"/>
</dbReference>
<dbReference type="HAMAP" id="MF_00652">
    <property type="entry name" value="UPF0246"/>
    <property type="match status" value="1"/>
</dbReference>
<dbReference type="InterPro" id="IPR005583">
    <property type="entry name" value="YaaA"/>
</dbReference>
<dbReference type="NCBIfam" id="NF002541">
    <property type="entry name" value="PRK02101.1-1"/>
    <property type="match status" value="1"/>
</dbReference>
<dbReference type="NCBIfam" id="NF002542">
    <property type="entry name" value="PRK02101.1-3"/>
    <property type="match status" value="1"/>
</dbReference>
<dbReference type="PANTHER" id="PTHR30283:SF4">
    <property type="entry name" value="PEROXIDE STRESS RESISTANCE PROTEIN YAAA"/>
    <property type="match status" value="1"/>
</dbReference>
<dbReference type="PANTHER" id="PTHR30283">
    <property type="entry name" value="PEROXIDE STRESS RESPONSE PROTEIN YAAA"/>
    <property type="match status" value="1"/>
</dbReference>
<dbReference type="Pfam" id="PF03883">
    <property type="entry name" value="H2O2_YaaD"/>
    <property type="match status" value="1"/>
</dbReference>
<protein>
    <recommendedName>
        <fullName evidence="1">UPF0246 protein BTH_I1090</fullName>
    </recommendedName>
</protein>
<evidence type="ECO:0000255" key="1">
    <source>
        <dbReference type="HAMAP-Rule" id="MF_00652"/>
    </source>
</evidence>
<sequence>MIIVLSPAKSLDYETPPHVSHHTLPQFADDAAALIDELRRLSPQQIGTLMSISDPLARLNFQRYADWSRTSTPANAKQAVLAFNGDVYEGLDARSLSPDDLDYAQRHVRVLSGLYGLLRPLDLLQPYRLEMGTRFTNARGKDLYAFWGERITHALNAELKTREGASRVLVNCASAEYFKSVKPKLLDARVVTPVFEDWKDGRYKIISFHAKRARGLMARYVVEGRIGSPDVLKDFASEGYAFDEAASNDDTFVFRRRAGA</sequence>
<reference key="1">
    <citation type="journal article" date="2005" name="BMC Genomics">
        <title>Bacterial genome adaptation to niches: divergence of the potential virulence genes in three Burkholderia species of different survival strategies.</title>
        <authorList>
            <person name="Kim H.S."/>
            <person name="Schell M.A."/>
            <person name="Yu Y."/>
            <person name="Ulrich R.L."/>
            <person name="Sarria S.H."/>
            <person name="Nierman W.C."/>
            <person name="DeShazer D."/>
        </authorList>
    </citation>
    <scope>NUCLEOTIDE SEQUENCE [LARGE SCALE GENOMIC DNA]</scope>
    <source>
        <strain>ATCC 700388 / DSM 13276 / CCUG 48851 / CIP 106301 / E264</strain>
    </source>
</reference>
<organism>
    <name type="scientific">Burkholderia thailandensis (strain ATCC 700388 / DSM 13276 / CCUG 48851 / CIP 106301 / E264)</name>
    <dbReference type="NCBI Taxonomy" id="271848"/>
    <lineage>
        <taxon>Bacteria</taxon>
        <taxon>Pseudomonadati</taxon>
        <taxon>Pseudomonadota</taxon>
        <taxon>Betaproteobacteria</taxon>
        <taxon>Burkholderiales</taxon>
        <taxon>Burkholderiaceae</taxon>
        <taxon>Burkholderia</taxon>
        <taxon>pseudomallei group</taxon>
    </lineage>
</organism>
<name>Y1090_BURTA</name>
<accession>Q2SZK6</accession>
<proteinExistence type="inferred from homology"/>
<comment type="similarity">
    <text evidence="1">Belongs to the UPF0246 family.</text>
</comment>